<sequence length="548" mass="59423">MSDARVPRIPAALSAPSLNRGVGFTHAQRRRLGLTGRLPSAVLTLDQQAERVWHQLQSLATELGRNLLLEQLHYRHEVLYFKVLADHLPELMPVVYTPTVGEAIQRFSDEYRGQRGLFLSIDEPDEIEEAFNTLGLGPEDVDLIVCTDAEAILGIGDWGVGGIQIAVGKLALYTAGGGVDPRRCLAVSLDVGTDNEQLLADPFYLGNRHARRRGREYDEFVSRYIETAQRLFPRAILHFEDFGPANARKILDTYGTDYCVFNDDMQGTGAVVLAAVYSGLKVTGIPLRDQTIVVFGAGTAGMGIADQIRDAMVADGATLEQAVSQIWPIDRPGLLFDDMDDLRDFQVPYAKNRHQLGVAVGDRVGLSDAIKIASPTILLGCSTVYGAFTKEVVEAMTASCKHPMIFPLSNPTSRMEAIPADVLAWSNGRALLATGSPVAPVEFDETTYVIGQANNVLAFPGIGLGVIVAGARLITRRMLHAAAKAIAHQANPTNPGDSLLPDVQNLRAISTTVAEAVYRAAVQDGVASRTHDDVRQAIVDTMWLPAYD</sequence>
<organism>
    <name type="scientific">Mycobacterium tuberculosis (strain CDC 1551 / Oshkosh)</name>
    <dbReference type="NCBI Taxonomy" id="83331"/>
    <lineage>
        <taxon>Bacteria</taxon>
        <taxon>Bacillati</taxon>
        <taxon>Actinomycetota</taxon>
        <taxon>Actinomycetes</taxon>
        <taxon>Mycobacteriales</taxon>
        <taxon>Mycobacteriaceae</taxon>
        <taxon>Mycobacterium</taxon>
        <taxon>Mycobacterium tuberculosis complex</taxon>
    </lineage>
</organism>
<keyword id="KW-0479">Metal-binding</keyword>
<keyword id="KW-0520">NAD</keyword>
<keyword id="KW-0560">Oxidoreductase</keyword>
<keyword id="KW-1185">Reference proteome</keyword>
<protein>
    <recommendedName>
        <fullName>Putative malate oxidoreductase [NAD]</fullName>
        <ecNumber>1.1.1.38</ecNumber>
    </recommendedName>
    <alternativeName>
        <fullName>Malic enzyme</fullName>
    </alternativeName>
</protein>
<reference key="1">
    <citation type="journal article" date="2002" name="J. Bacteriol.">
        <title>Whole-genome comparison of Mycobacterium tuberculosis clinical and laboratory strains.</title>
        <authorList>
            <person name="Fleischmann R.D."/>
            <person name="Alland D."/>
            <person name="Eisen J.A."/>
            <person name="Carpenter L."/>
            <person name="White O."/>
            <person name="Peterson J.D."/>
            <person name="DeBoy R.T."/>
            <person name="Dodson R.J."/>
            <person name="Gwinn M.L."/>
            <person name="Haft D.H."/>
            <person name="Hickey E.K."/>
            <person name="Kolonay J.F."/>
            <person name="Nelson W.C."/>
            <person name="Umayam L.A."/>
            <person name="Ermolaeva M.D."/>
            <person name="Salzberg S.L."/>
            <person name="Delcher A."/>
            <person name="Utterback T.R."/>
            <person name="Weidman J.F."/>
            <person name="Khouri H.M."/>
            <person name="Gill J."/>
            <person name="Mikula A."/>
            <person name="Bishai W."/>
            <person name="Jacobs W.R. Jr."/>
            <person name="Venter J.C."/>
            <person name="Fraser C.M."/>
        </authorList>
    </citation>
    <scope>NUCLEOTIDE SEQUENCE [LARGE SCALE GENOMIC DNA]</scope>
    <source>
        <strain>CDC 1551 / Oshkosh</strain>
    </source>
</reference>
<feature type="chain" id="PRO_0000427728" description="Putative malate oxidoreductase [NAD]">
    <location>
        <begin position="1"/>
        <end position="548"/>
    </location>
</feature>
<feature type="active site" description="Proton donor" evidence="2">
    <location>
        <position position="96"/>
    </location>
</feature>
<feature type="active site" description="Proton acceptor" evidence="2">
    <location>
        <position position="169"/>
    </location>
</feature>
<feature type="binding site" evidence="2">
    <location>
        <position position="240"/>
    </location>
    <ligand>
        <name>a divalent metal cation</name>
        <dbReference type="ChEBI" id="CHEBI:60240"/>
    </ligand>
</feature>
<feature type="binding site" evidence="2">
    <location>
        <position position="241"/>
    </location>
    <ligand>
        <name>a divalent metal cation</name>
        <dbReference type="ChEBI" id="CHEBI:60240"/>
    </ligand>
</feature>
<feature type="binding site" evidence="2">
    <location>
        <position position="264"/>
    </location>
    <ligand>
        <name>a divalent metal cation</name>
        <dbReference type="ChEBI" id="CHEBI:60240"/>
    </ligand>
</feature>
<feature type="binding site" evidence="2">
    <location>
        <begin position="297"/>
        <end position="300"/>
    </location>
    <ligand>
        <name>NAD(+)</name>
        <dbReference type="ChEBI" id="CHEBI:57540"/>
    </ligand>
</feature>
<feature type="binding site" evidence="2">
    <location>
        <position position="410"/>
    </location>
    <ligand>
        <name>NAD(+)</name>
        <dbReference type="ChEBI" id="CHEBI:57540"/>
    </ligand>
</feature>
<feature type="binding site" evidence="2">
    <location>
        <position position="455"/>
    </location>
    <ligand>
        <name>NAD(+)</name>
        <dbReference type="ChEBI" id="CHEBI:57540"/>
    </ligand>
</feature>
<proteinExistence type="inferred from homology"/>
<gene>
    <name type="primary">mez</name>
    <name type="ordered locus">MT2394</name>
</gene>
<comment type="catalytic activity">
    <reaction>
        <text>(S)-malate + NAD(+) = pyruvate + CO2 + NADH</text>
        <dbReference type="Rhea" id="RHEA:12653"/>
        <dbReference type="ChEBI" id="CHEBI:15361"/>
        <dbReference type="ChEBI" id="CHEBI:15589"/>
        <dbReference type="ChEBI" id="CHEBI:16526"/>
        <dbReference type="ChEBI" id="CHEBI:57540"/>
        <dbReference type="ChEBI" id="CHEBI:57945"/>
        <dbReference type="EC" id="1.1.1.38"/>
    </reaction>
</comment>
<comment type="catalytic activity">
    <reaction>
        <text>oxaloacetate + H(+) = pyruvate + CO2</text>
        <dbReference type="Rhea" id="RHEA:15641"/>
        <dbReference type="ChEBI" id="CHEBI:15361"/>
        <dbReference type="ChEBI" id="CHEBI:15378"/>
        <dbReference type="ChEBI" id="CHEBI:16452"/>
        <dbReference type="ChEBI" id="CHEBI:16526"/>
        <dbReference type="EC" id="1.1.1.38"/>
    </reaction>
</comment>
<comment type="cofactor">
    <cofactor evidence="1">
        <name>Mg(2+)</name>
        <dbReference type="ChEBI" id="CHEBI:18420"/>
    </cofactor>
    <cofactor evidence="1">
        <name>Mn(2+)</name>
        <dbReference type="ChEBI" id="CHEBI:29035"/>
    </cofactor>
    <text evidence="1">Divalent metal cations. Prefers magnesium or manganese.</text>
</comment>
<comment type="similarity">
    <text evidence="3">Belongs to the malic enzymes family.</text>
</comment>
<name>MAOX_MYCTO</name>
<evidence type="ECO:0000250" key="1"/>
<evidence type="ECO:0000250" key="2">
    <source>
        <dbReference type="UniProtKB" id="P40927"/>
    </source>
</evidence>
<evidence type="ECO:0000305" key="3"/>
<accession>P9WK24</accession>
<accession>L0T9I1</accession>
<accession>P71880</accession>
<dbReference type="EC" id="1.1.1.38"/>
<dbReference type="EMBL" id="AE000516">
    <property type="protein sequence ID" value="AAK46686.1"/>
    <property type="molecule type" value="Genomic_DNA"/>
</dbReference>
<dbReference type="PIR" id="E70705">
    <property type="entry name" value="E70705"/>
</dbReference>
<dbReference type="RefSeq" id="WP_003899273.1">
    <property type="nucleotide sequence ID" value="NZ_KK341227.1"/>
</dbReference>
<dbReference type="SMR" id="P9WK24"/>
<dbReference type="KEGG" id="mtc:MT2394"/>
<dbReference type="PATRIC" id="fig|83331.31.peg.2582"/>
<dbReference type="HOGENOM" id="CLU_011405_5_2_11"/>
<dbReference type="Proteomes" id="UP000001020">
    <property type="component" value="Chromosome"/>
</dbReference>
<dbReference type="GO" id="GO:0005829">
    <property type="term" value="C:cytosol"/>
    <property type="evidence" value="ECO:0007669"/>
    <property type="project" value="TreeGrafter"/>
</dbReference>
<dbReference type="GO" id="GO:0004471">
    <property type="term" value="F:malate dehydrogenase (decarboxylating) (NAD+) activity"/>
    <property type="evidence" value="ECO:0007669"/>
    <property type="project" value="RHEA"/>
</dbReference>
<dbReference type="GO" id="GO:0046872">
    <property type="term" value="F:metal ion binding"/>
    <property type="evidence" value="ECO:0007669"/>
    <property type="project" value="UniProtKB-KW"/>
</dbReference>
<dbReference type="GO" id="GO:0051287">
    <property type="term" value="F:NAD binding"/>
    <property type="evidence" value="ECO:0007669"/>
    <property type="project" value="InterPro"/>
</dbReference>
<dbReference type="GO" id="GO:0008948">
    <property type="term" value="F:oxaloacetate decarboxylase activity"/>
    <property type="evidence" value="ECO:0007669"/>
    <property type="project" value="RHEA"/>
</dbReference>
<dbReference type="GO" id="GO:0006108">
    <property type="term" value="P:malate metabolic process"/>
    <property type="evidence" value="ECO:0007669"/>
    <property type="project" value="TreeGrafter"/>
</dbReference>
<dbReference type="CDD" id="cd05312">
    <property type="entry name" value="NAD_bind_1_malic_enz"/>
    <property type="match status" value="1"/>
</dbReference>
<dbReference type="FunFam" id="3.40.50.10380:FF:000001">
    <property type="entry name" value="NAD-dependent malic enzyme"/>
    <property type="match status" value="1"/>
</dbReference>
<dbReference type="Gene3D" id="3.40.50.10380">
    <property type="entry name" value="Malic enzyme, N-terminal domain"/>
    <property type="match status" value="1"/>
</dbReference>
<dbReference type="Gene3D" id="3.40.50.720">
    <property type="entry name" value="NAD(P)-binding Rossmann-like Domain"/>
    <property type="match status" value="1"/>
</dbReference>
<dbReference type="InterPro" id="IPR046346">
    <property type="entry name" value="Aminoacid_DH-like_N_sf"/>
</dbReference>
<dbReference type="InterPro" id="IPR015884">
    <property type="entry name" value="Malic_enzyme_CS"/>
</dbReference>
<dbReference type="InterPro" id="IPR012301">
    <property type="entry name" value="Malic_N_dom"/>
</dbReference>
<dbReference type="InterPro" id="IPR037062">
    <property type="entry name" value="Malic_N_dom_sf"/>
</dbReference>
<dbReference type="InterPro" id="IPR012302">
    <property type="entry name" value="Malic_NAD-bd"/>
</dbReference>
<dbReference type="InterPro" id="IPR001891">
    <property type="entry name" value="Malic_OxRdtase"/>
</dbReference>
<dbReference type="InterPro" id="IPR036291">
    <property type="entry name" value="NAD(P)-bd_dom_sf"/>
</dbReference>
<dbReference type="NCBIfam" id="NF010052">
    <property type="entry name" value="PRK13529.1"/>
    <property type="match status" value="1"/>
</dbReference>
<dbReference type="PANTHER" id="PTHR23406">
    <property type="entry name" value="MALIC ENZYME-RELATED"/>
    <property type="match status" value="1"/>
</dbReference>
<dbReference type="PANTHER" id="PTHR23406:SF34">
    <property type="entry name" value="NAD-DEPENDENT MALIC ENZYME, MITOCHONDRIAL"/>
    <property type="match status" value="1"/>
</dbReference>
<dbReference type="Pfam" id="PF00390">
    <property type="entry name" value="malic"/>
    <property type="match status" value="1"/>
</dbReference>
<dbReference type="Pfam" id="PF03949">
    <property type="entry name" value="Malic_M"/>
    <property type="match status" value="1"/>
</dbReference>
<dbReference type="PIRSF" id="PIRSF000106">
    <property type="entry name" value="ME"/>
    <property type="match status" value="1"/>
</dbReference>
<dbReference type="PRINTS" id="PR00072">
    <property type="entry name" value="MALOXRDTASE"/>
</dbReference>
<dbReference type="SMART" id="SM01274">
    <property type="entry name" value="malic"/>
    <property type="match status" value="1"/>
</dbReference>
<dbReference type="SMART" id="SM00919">
    <property type="entry name" value="Malic_M"/>
    <property type="match status" value="1"/>
</dbReference>
<dbReference type="SUPFAM" id="SSF53223">
    <property type="entry name" value="Aminoacid dehydrogenase-like, N-terminal domain"/>
    <property type="match status" value="1"/>
</dbReference>
<dbReference type="SUPFAM" id="SSF51735">
    <property type="entry name" value="NAD(P)-binding Rossmann-fold domains"/>
    <property type="match status" value="1"/>
</dbReference>
<dbReference type="PROSITE" id="PS00331">
    <property type="entry name" value="MALIC_ENZYMES"/>
    <property type="match status" value="1"/>
</dbReference>